<dbReference type="EC" id="6.1.1.5" evidence="1"/>
<dbReference type="EMBL" id="AE015924">
    <property type="protein sequence ID" value="AAQ66625.1"/>
    <property type="molecule type" value="Genomic_DNA"/>
</dbReference>
<dbReference type="RefSeq" id="WP_005874631.1">
    <property type="nucleotide sequence ID" value="NC_002950.2"/>
</dbReference>
<dbReference type="SMR" id="Q7MUD3"/>
<dbReference type="STRING" id="242619.PG_1596"/>
<dbReference type="EnsemblBacteria" id="AAQ66625">
    <property type="protein sequence ID" value="AAQ66625"/>
    <property type="gene ID" value="PG_1596"/>
</dbReference>
<dbReference type="KEGG" id="pgi:PG_1596"/>
<dbReference type="PATRIC" id="fig|242619.8.peg.1479"/>
<dbReference type="eggNOG" id="COG0060">
    <property type="taxonomic scope" value="Bacteria"/>
</dbReference>
<dbReference type="HOGENOM" id="CLU_001493_1_1_10"/>
<dbReference type="BioCyc" id="PGIN242619:G1G02-1490-MONOMER"/>
<dbReference type="Proteomes" id="UP000000588">
    <property type="component" value="Chromosome"/>
</dbReference>
<dbReference type="GO" id="GO:0005737">
    <property type="term" value="C:cytoplasm"/>
    <property type="evidence" value="ECO:0007669"/>
    <property type="project" value="UniProtKB-SubCell"/>
</dbReference>
<dbReference type="GO" id="GO:0002161">
    <property type="term" value="F:aminoacyl-tRNA deacylase activity"/>
    <property type="evidence" value="ECO:0007669"/>
    <property type="project" value="InterPro"/>
</dbReference>
<dbReference type="GO" id="GO:0005524">
    <property type="term" value="F:ATP binding"/>
    <property type="evidence" value="ECO:0007669"/>
    <property type="project" value="UniProtKB-UniRule"/>
</dbReference>
<dbReference type="GO" id="GO:0004822">
    <property type="term" value="F:isoleucine-tRNA ligase activity"/>
    <property type="evidence" value="ECO:0007669"/>
    <property type="project" value="UniProtKB-UniRule"/>
</dbReference>
<dbReference type="GO" id="GO:0000049">
    <property type="term" value="F:tRNA binding"/>
    <property type="evidence" value="ECO:0007669"/>
    <property type="project" value="InterPro"/>
</dbReference>
<dbReference type="GO" id="GO:0008270">
    <property type="term" value="F:zinc ion binding"/>
    <property type="evidence" value="ECO:0007669"/>
    <property type="project" value="UniProtKB-UniRule"/>
</dbReference>
<dbReference type="GO" id="GO:0006428">
    <property type="term" value="P:isoleucyl-tRNA aminoacylation"/>
    <property type="evidence" value="ECO:0007669"/>
    <property type="project" value="UniProtKB-UniRule"/>
</dbReference>
<dbReference type="CDD" id="cd07961">
    <property type="entry name" value="Anticodon_Ia_Ile_ABEc"/>
    <property type="match status" value="1"/>
</dbReference>
<dbReference type="CDD" id="cd00818">
    <property type="entry name" value="IleRS_core"/>
    <property type="match status" value="1"/>
</dbReference>
<dbReference type="FunFam" id="3.40.50.620:FF:000205">
    <property type="entry name" value="Isoleucine--tRNA ligase"/>
    <property type="match status" value="1"/>
</dbReference>
<dbReference type="Gene3D" id="3.40.50.620">
    <property type="entry name" value="HUPs"/>
    <property type="match status" value="2"/>
</dbReference>
<dbReference type="Gene3D" id="1.10.730.10">
    <property type="entry name" value="Isoleucyl-tRNA Synthetase, Domain 1"/>
    <property type="match status" value="1"/>
</dbReference>
<dbReference type="Gene3D" id="3.90.740.10">
    <property type="entry name" value="Valyl/Leucyl/Isoleucyl-tRNA synthetase, editing domain"/>
    <property type="match status" value="1"/>
</dbReference>
<dbReference type="HAMAP" id="MF_02003">
    <property type="entry name" value="Ile_tRNA_synth_type2"/>
    <property type="match status" value="1"/>
</dbReference>
<dbReference type="InterPro" id="IPR002300">
    <property type="entry name" value="aa-tRNA-synth_Ia"/>
</dbReference>
<dbReference type="InterPro" id="IPR033709">
    <property type="entry name" value="Anticodon_Ile_ABEc"/>
</dbReference>
<dbReference type="InterPro" id="IPR002301">
    <property type="entry name" value="Ile-tRNA-ligase"/>
</dbReference>
<dbReference type="InterPro" id="IPR023586">
    <property type="entry name" value="Ile-tRNA-ligase_type2"/>
</dbReference>
<dbReference type="InterPro" id="IPR013155">
    <property type="entry name" value="M/V/L/I-tRNA-synth_anticd-bd"/>
</dbReference>
<dbReference type="InterPro" id="IPR014729">
    <property type="entry name" value="Rossmann-like_a/b/a_fold"/>
</dbReference>
<dbReference type="InterPro" id="IPR009080">
    <property type="entry name" value="tRNAsynth_Ia_anticodon-bd"/>
</dbReference>
<dbReference type="InterPro" id="IPR009008">
    <property type="entry name" value="Val/Leu/Ile-tRNA-synth_edit"/>
</dbReference>
<dbReference type="NCBIfam" id="TIGR00392">
    <property type="entry name" value="ileS"/>
    <property type="match status" value="1"/>
</dbReference>
<dbReference type="PANTHER" id="PTHR42780:SF1">
    <property type="entry name" value="ISOLEUCINE--TRNA LIGASE, CYTOPLASMIC"/>
    <property type="match status" value="1"/>
</dbReference>
<dbReference type="PANTHER" id="PTHR42780">
    <property type="entry name" value="SOLEUCYL-TRNA SYNTHETASE"/>
    <property type="match status" value="1"/>
</dbReference>
<dbReference type="Pfam" id="PF08264">
    <property type="entry name" value="Anticodon_1"/>
    <property type="match status" value="1"/>
</dbReference>
<dbReference type="Pfam" id="PF19302">
    <property type="entry name" value="DUF5915"/>
    <property type="match status" value="1"/>
</dbReference>
<dbReference type="Pfam" id="PF00133">
    <property type="entry name" value="tRNA-synt_1"/>
    <property type="match status" value="1"/>
</dbReference>
<dbReference type="PRINTS" id="PR00984">
    <property type="entry name" value="TRNASYNTHILE"/>
</dbReference>
<dbReference type="SUPFAM" id="SSF47323">
    <property type="entry name" value="Anticodon-binding domain of a subclass of class I aminoacyl-tRNA synthetases"/>
    <property type="match status" value="1"/>
</dbReference>
<dbReference type="SUPFAM" id="SSF52374">
    <property type="entry name" value="Nucleotidylyl transferase"/>
    <property type="match status" value="1"/>
</dbReference>
<dbReference type="SUPFAM" id="SSF50677">
    <property type="entry name" value="ValRS/IleRS/LeuRS editing domain"/>
    <property type="match status" value="1"/>
</dbReference>
<organism>
    <name type="scientific">Porphyromonas gingivalis (strain ATCC BAA-308 / W83)</name>
    <dbReference type="NCBI Taxonomy" id="242619"/>
    <lineage>
        <taxon>Bacteria</taxon>
        <taxon>Pseudomonadati</taxon>
        <taxon>Bacteroidota</taxon>
        <taxon>Bacteroidia</taxon>
        <taxon>Bacteroidales</taxon>
        <taxon>Porphyromonadaceae</taxon>
        <taxon>Porphyromonas</taxon>
    </lineage>
</organism>
<feature type="chain" id="PRO_0000098554" description="Isoleucine--tRNA ligase">
    <location>
        <begin position="1"/>
        <end position="1137"/>
    </location>
</feature>
<feature type="short sequence motif" description="'HIGH' region">
    <location>
        <begin position="50"/>
        <end position="60"/>
    </location>
</feature>
<feature type="short sequence motif" description="'KMSKS' region">
    <location>
        <begin position="688"/>
        <end position="692"/>
    </location>
</feature>
<feature type="binding site" evidence="1">
    <location>
        <position position="691"/>
    </location>
    <ligand>
        <name>ATP</name>
        <dbReference type="ChEBI" id="CHEBI:30616"/>
    </ligand>
</feature>
<evidence type="ECO:0000255" key="1">
    <source>
        <dbReference type="HAMAP-Rule" id="MF_02003"/>
    </source>
</evidence>
<protein>
    <recommendedName>
        <fullName evidence="1">Isoleucine--tRNA ligase</fullName>
        <ecNumber evidence="1">6.1.1.5</ecNumber>
    </recommendedName>
    <alternativeName>
        <fullName evidence="1">Isoleucyl-tRNA synthetase</fullName>
        <shortName evidence="1">IleRS</shortName>
    </alternativeName>
</protein>
<comment type="function">
    <text evidence="1">Catalyzes the attachment of isoleucine to tRNA(Ile). As IleRS can inadvertently accommodate and process structurally similar amino acids such as valine, to avoid such errors it has two additional distinct tRNA(Ile)-dependent editing activities. One activity is designated as 'pretransfer' editing and involves the hydrolysis of activated Val-AMP. The other activity is designated 'posttransfer' editing and involves deacylation of mischarged Val-tRNA(Ile).</text>
</comment>
<comment type="catalytic activity">
    <reaction evidence="1">
        <text>tRNA(Ile) + L-isoleucine + ATP = L-isoleucyl-tRNA(Ile) + AMP + diphosphate</text>
        <dbReference type="Rhea" id="RHEA:11060"/>
        <dbReference type="Rhea" id="RHEA-COMP:9666"/>
        <dbReference type="Rhea" id="RHEA-COMP:9695"/>
        <dbReference type="ChEBI" id="CHEBI:30616"/>
        <dbReference type="ChEBI" id="CHEBI:33019"/>
        <dbReference type="ChEBI" id="CHEBI:58045"/>
        <dbReference type="ChEBI" id="CHEBI:78442"/>
        <dbReference type="ChEBI" id="CHEBI:78528"/>
        <dbReference type="ChEBI" id="CHEBI:456215"/>
        <dbReference type="EC" id="6.1.1.5"/>
    </reaction>
</comment>
<comment type="cofactor">
    <cofactor evidence="1">
        <name>Zn(2+)</name>
        <dbReference type="ChEBI" id="CHEBI:29105"/>
    </cofactor>
</comment>
<comment type="subunit">
    <text evidence="1">Monomer.</text>
</comment>
<comment type="subcellular location">
    <subcellularLocation>
        <location evidence="1">Cytoplasm</location>
    </subcellularLocation>
</comment>
<comment type="domain">
    <text evidence="1">IleRS has two distinct active sites: one for aminoacylation and one for editing. The misactivated valine is translocated from the active site to the editing site, which sterically excludes the correctly activated isoleucine. The single editing site contains two valyl binding pockets, one specific for each substrate (Val-AMP or Val-tRNA(Ile)).</text>
</comment>
<comment type="similarity">
    <text evidence="1">Belongs to the class-I aminoacyl-tRNA synthetase family. IleS type 2 subfamily.</text>
</comment>
<name>SYI_PORGI</name>
<reference key="1">
    <citation type="journal article" date="2003" name="J. Bacteriol.">
        <title>Complete genome sequence of the oral pathogenic bacterium Porphyromonas gingivalis strain W83.</title>
        <authorList>
            <person name="Nelson K.E."/>
            <person name="Fleischmann R.D."/>
            <person name="DeBoy R.T."/>
            <person name="Paulsen I.T."/>
            <person name="Fouts D.E."/>
            <person name="Eisen J.A."/>
            <person name="Daugherty S.C."/>
            <person name="Dodson R.J."/>
            <person name="Durkin A.S."/>
            <person name="Gwinn M.L."/>
            <person name="Haft D.H."/>
            <person name="Kolonay J.F."/>
            <person name="Nelson W.C."/>
            <person name="Mason T.M."/>
            <person name="Tallon L."/>
            <person name="Gray J."/>
            <person name="Granger D."/>
            <person name="Tettelin H."/>
            <person name="Dong H."/>
            <person name="Galvin J.L."/>
            <person name="Duncan M.J."/>
            <person name="Dewhirst F.E."/>
            <person name="Fraser C.M."/>
        </authorList>
    </citation>
    <scope>NUCLEOTIDE SEQUENCE [LARGE SCALE GENOMIC DNA]</scope>
    <source>
        <strain>ATCC BAA-308 / W83</strain>
    </source>
</reference>
<accession>Q7MUD3</accession>
<proteinExistence type="inferred from homology"/>
<sequence>MSRRFAEYESLDLSRVNEEVLADWMQHRLFEESLKSREGAPSFVFYEGPPSANGMPGIHHVMARAIKDTICRYKTMKGFRVDRKAGWDTHGLPVELGVEKSLGITKEDIGKSISVEEYNAACRRDVMKFTKEWEDLTHKMGYWVDMEHPYITYDNRYIETLWWLLAELYKKGLLYKGYTIQPYSPAAGTGLSTHELNQPGCYRDVKDTTCVAQFKIMDPKPEMQLHGDAFFLAWTTTPWTLPSNTALCVGPEIEYLAVQTFNPYNGIPITVVLGKPLLHTLFNPKGECEEIPASYDPAQKLLPYKVIASWKGKELEGMRYEQLIPWVNPGEGAFRVITGDFVTTEDGTGIVHIAPTFGADDDRVAKKSGVPPLMLRDKEGNMRPMVDLAGRYFPTTDLDPVFVEKHMDLPLYDVYAGRYVKNAYDAGKTEKDETLDVELCVMLKMQNRVFRIEKMTHNYPHCWRTDKPVLYYPLDSWFIRTTACKEEMIANNGKIYWKPESTGTGRFGKWLENLQDWNLSRSRYWGTPLPIWRTEDGSEEICIGSVEELYNEIEKAVKAGMMERNPWAGFKPGVYTEENYAKIDLHRPFVDGITLCSPSGQPMRRELDLIDVWFDSGAMPYAQMHYPFENRERVEDGSVFPADFIAEGVDQTRGWFFTLHAIATMISGTSSFKVVVSNGLVLDKKGNKMSKRLGNAVDPFETIKKYGSDPLRWYMITNSSPWDNLKFDTDGVEEVRRKFFGTLYNTYQFFALYANLDGFTGEEESIPFAKRPEIDRWILSELNTLIREVDDQLSDYEPTRAGRAISDFVSENLSNWYVRLSRRRFWAGDMTEDKLSAYQTLYTSLLTVSKLMAPISPFYADRLYRDLTGKDESVHLALFPRPDQSQVDRALEQSMQMAQQISSMVLALRRRVNLKVRQPLATLMIPAIDDEQRRCIESVQPLILSEVNVKELRFVDDSMGILVKRIKPDFKRLGPRYGKVMKALAEAVTAMTQEEIRSLEKAGTFRMEVAGTPVELELADVEIVSEDIPGWLVANEGNLTVALDITVTDELRSEGLARELVNRVQNIRKQSGFEVSDKVDVLLLSNDIMDKVVAEHHDYIAQQIQAESLEISDAVSDGVELDFDDFVLSIQVVKHQG</sequence>
<gene>
    <name evidence="1" type="primary">ileS</name>
    <name type="ordered locus">PG_1596</name>
</gene>
<keyword id="KW-0030">Aminoacyl-tRNA synthetase</keyword>
<keyword id="KW-0067">ATP-binding</keyword>
<keyword id="KW-0963">Cytoplasm</keyword>
<keyword id="KW-0436">Ligase</keyword>
<keyword id="KW-0479">Metal-binding</keyword>
<keyword id="KW-0547">Nucleotide-binding</keyword>
<keyword id="KW-0648">Protein biosynthesis</keyword>
<keyword id="KW-1185">Reference proteome</keyword>
<keyword id="KW-0862">Zinc</keyword>